<sequence>MNVFWFIPTHGDSRYLGTAEGARAADYDYFRQVAVAADTLGYDGVLLPTGRSCEDAWVVASSLIPATKRLKFLVAIRPGLSSPGLSARMASTFDRLSDGRLLINVVTGGDSAELEGDGLFADHDTRYAITDDFLHIWRGLLAESHENGGIDFDGEHLSAKGGKLLYPPVQRPHPPLWFGGSSPAAHAIAADHIDTYLSWGEPPAAVEKKIADIRARAAARGREIKFGIRLHVIVRETQEEAWRDADRLISRLDDDTIARAQQAFAKMDSEGQRRMAALHGGKRGSRQELEIYPNLWAGVGLVRGGAGTALVGNPEQIAARMREYAALGIETFILSGYPHLEESYRFAELVFPLVKGGGNTRRAGPLSGPFGEVVGNQYLPKASQS</sequence>
<accession>Q3JSR8</accession>
<comment type="function">
    <text evidence="1">Catalyzes the desulfonation of aliphatic sulfonates.</text>
</comment>
<comment type="catalytic activity">
    <reaction evidence="1">
        <text>an alkanesulfonate + FMNH2 + O2 = an aldehyde + FMN + sulfite + H2O + 2 H(+)</text>
        <dbReference type="Rhea" id="RHEA:23064"/>
        <dbReference type="ChEBI" id="CHEBI:15377"/>
        <dbReference type="ChEBI" id="CHEBI:15378"/>
        <dbReference type="ChEBI" id="CHEBI:15379"/>
        <dbReference type="ChEBI" id="CHEBI:17359"/>
        <dbReference type="ChEBI" id="CHEBI:17478"/>
        <dbReference type="ChEBI" id="CHEBI:57618"/>
        <dbReference type="ChEBI" id="CHEBI:58210"/>
        <dbReference type="ChEBI" id="CHEBI:134249"/>
        <dbReference type="EC" id="1.14.14.5"/>
    </reaction>
</comment>
<comment type="similarity">
    <text evidence="1">Belongs to the SsuD family.</text>
</comment>
<comment type="sequence caution" evidence="2">
    <conflict type="erroneous initiation">
        <sequence resource="EMBL-CDS" id="ABA49294"/>
    </conflict>
    <text>Extended N-terminus.</text>
</comment>
<gene>
    <name evidence="1" type="primary">ssuD</name>
    <name type="ordered locus">BURPS1710b_1989</name>
</gene>
<reference key="1">
    <citation type="journal article" date="2010" name="Genome Biol. Evol.">
        <title>Continuing evolution of Burkholderia mallei through genome reduction and large-scale rearrangements.</title>
        <authorList>
            <person name="Losada L."/>
            <person name="Ronning C.M."/>
            <person name="DeShazer D."/>
            <person name="Woods D."/>
            <person name="Fedorova N."/>
            <person name="Kim H.S."/>
            <person name="Shabalina S.A."/>
            <person name="Pearson T.R."/>
            <person name="Brinkac L."/>
            <person name="Tan P."/>
            <person name="Nandi T."/>
            <person name="Crabtree J."/>
            <person name="Badger J."/>
            <person name="Beckstrom-Sternberg S."/>
            <person name="Saqib M."/>
            <person name="Schutzer S.E."/>
            <person name="Keim P."/>
            <person name="Nierman W.C."/>
        </authorList>
    </citation>
    <scope>NUCLEOTIDE SEQUENCE [LARGE SCALE GENOMIC DNA]</scope>
    <source>
        <strain>1710b</strain>
    </source>
</reference>
<protein>
    <recommendedName>
        <fullName evidence="1">Alkanesulfonate monooxygenase</fullName>
        <ecNumber evidence="1">1.14.14.5</ecNumber>
    </recommendedName>
    <alternativeName>
        <fullName evidence="1">FMNH2-dependent aliphatic sulfonate monooxygenase</fullName>
    </alternativeName>
</protein>
<dbReference type="EC" id="1.14.14.5" evidence="1"/>
<dbReference type="EMBL" id="CP000124">
    <property type="protein sequence ID" value="ABA49294.1"/>
    <property type="status" value="ALT_INIT"/>
    <property type="molecule type" value="Genomic_DNA"/>
</dbReference>
<dbReference type="RefSeq" id="WP_004192866.1">
    <property type="nucleotide sequence ID" value="NC_007434.1"/>
</dbReference>
<dbReference type="SMR" id="Q3JSR8"/>
<dbReference type="EnsemblBacteria" id="ABA49294">
    <property type="protein sequence ID" value="ABA49294"/>
    <property type="gene ID" value="BURPS1710b_1989"/>
</dbReference>
<dbReference type="GeneID" id="93060138"/>
<dbReference type="KEGG" id="bpm:BURPS1710b_1989"/>
<dbReference type="HOGENOM" id="CLU_027853_1_0_4"/>
<dbReference type="Proteomes" id="UP000002700">
    <property type="component" value="Chromosome I"/>
</dbReference>
<dbReference type="GO" id="GO:0008726">
    <property type="term" value="F:alkanesulfonate monooxygenase activity"/>
    <property type="evidence" value="ECO:0007669"/>
    <property type="project" value="UniProtKB-UniRule"/>
</dbReference>
<dbReference type="GO" id="GO:0046306">
    <property type="term" value="P:alkanesulfonate catabolic process"/>
    <property type="evidence" value="ECO:0007669"/>
    <property type="project" value="TreeGrafter"/>
</dbReference>
<dbReference type="CDD" id="cd01094">
    <property type="entry name" value="Alkanesulfonate_monoxygenase"/>
    <property type="match status" value="1"/>
</dbReference>
<dbReference type="Gene3D" id="3.20.20.30">
    <property type="entry name" value="Luciferase-like domain"/>
    <property type="match status" value="1"/>
</dbReference>
<dbReference type="HAMAP" id="MF_01229">
    <property type="entry name" value="Alkanesulf_monooxygen"/>
    <property type="match status" value="1"/>
</dbReference>
<dbReference type="InterPro" id="IPR019911">
    <property type="entry name" value="Alkanesulphonate_mOase_FMN-dep"/>
</dbReference>
<dbReference type="InterPro" id="IPR011251">
    <property type="entry name" value="Luciferase-like_dom"/>
</dbReference>
<dbReference type="InterPro" id="IPR036661">
    <property type="entry name" value="Luciferase-like_sf"/>
</dbReference>
<dbReference type="InterPro" id="IPR050172">
    <property type="entry name" value="SsuD_RutA_monooxygenase"/>
</dbReference>
<dbReference type="NCBIfam" id="TIGR03565">
    <property type="entry name" value="alk_sulf_monoox"/>
    <property type="match status" value="1"/>
</dbReference>
<dbReference type="NCBIfam" id="NF001939">
    <property type="entry name" value="PRK00719.1"/>
    <property type="match status" value="1"/>
</dbReference>
<dbReference type="PANTHER" id="PTHR42847">
    <property type="entry name" value="ALKANESULFONATE MONOOXYGENASE"/>
    <property type="match status" value="1"/>
</dbReference>
<dbReference type="PANTHER" id="PTHR42847:SF4">
    <property type="entry name" value="ALKANESULFONATE MONOOXYGENASE-RELATED"/>
    <property type="match status" value="1"/>
</dbReference>
<dbReference type="Pfam" id="PF00296">
    <property type="entry name" value="Bac_luciferase"/>
    <property type="match status" value="1"/>
</dbReference>
<dbReference type="SUPFAM" id="SSF51679">
    <property type="entry name" value="Bacterial luciferase-like"/>
    <property type="match status" value="1"/>
</dbReference>
<organism>
    <name type="scientific">Burkholderia pseudomallei (strain 1710b)</name>
    <dbReference type="NCBI Taxonomy" id="320372"/>
    <lineage>
        <taxon>Bacteria</taxon>
        <taxon>Pseudomonadati</taxon>
        <taxon>Pseudomonadota</taxon>
        <taxon>Betaproteobacteria</taxon>
        <taxon>Burkholderiales</taxon>
        <taxon>Burkholderiaceae</taxon>
        <taxon>Burkholderia</taxon>
        <taxon>pseudomallei group</taxon>
    </lineage>
</organism>
<feature type="chain" id="PRO_0000403213" description="Alkanesulfonate monooxygenase">
    <location>
        <begin position="1"/>
        <end position="385"/>
    </location>
</feature>
<proteinExistence type="inferred from homology"/>
<name>SSUD_BURP1</name>
<keyword id="KW-0285">Flavoprotein</keyword>
<keyword id="KW-0288">FMN</keyword>
<keyword id="KW-0503">Monooxygenase</keyword>
<keyword id="KW-0560">Oxidoreductase</keyword>
<evidence type="ECO:0000255" key="1">
    <source>
        <dbReference type="HAMAP-Rule" id="MF_01229"/>
    </source>
</evidence>
<evidence type="ECO:0000305" key="2"/>